<gene>
    <name evidence="1" type="primary">rsxD</name>
    <name type="ordered locus">ECIAI1_1682</name>
</gene>
<reference key="1">
    <citation type="journal article" date="2009" name="PLoS Genet.">
        <title>Organised genome dynamics in the Escherichia coli species results in highly diverse adaptive paths.</title>
        <authorList>
            <person name="Touchon M."/>
            <person name="Hoede C."/>
            <person name="Tenaillon O."/>
            <person name="Barbe V."/>
            <person name="Baeriswyl S."/>
            <person name="Bidet P."/>
            <person name="Bingen E."/>
            <person name="Bonacorsi S."/>
            <person name="Bouchier C."/>
            <person name="Bouvet O."/>
            <person name="Calteau A."/>
            <person name="Chiapello H."/>
            <person name="Clermont O."/>
            <person name="Cruveiller S."/>
            <person name="Danchin A."/>
            <person name="Diard M."/>
            <person name="Dossat C."/>
            <person name="Karoui M.E."/>
            <person name="Frapy E."/>
            <person name="Garry L."/>
            <person name="Ghigo J.M."/>
            <person name="Gilles A.M."/>
            <person name="Johnson J."/>
            <person name="Le Bouguenec C."/>
            <person name="Lescat M."/>
            <person name="Mangenot S."/>
            <person name="Martinez-Jehanne V."/>
            <person name="Matic I."/>
            <person name="Nassif X."/>
            <person name="Oztas S."/>
            <person name="Petit M.A."/>
            <person name="Pichon C."/>
            <person name="Rouy Z."/>
            <person name="Ruf C.S."/>
            <person name="Schneider D."/>
            <person name="Tourret J."/>
            <person name="Vacherie B."/>
            <person name="Vallenet D."/>
            <person name="Medigue C."/>
            <person name="Rocha E.P.C."/>
            <person name="Denamur E."/>
        </authorList>
    </citation>
    <scope>NUCLEOTIDE SEQUENCE [LARGE SCALE GENOMIC DNA]</scope>
    <source>
        <strain>IAI1</strain>
    </source>
</reference>
<keyword id="KW-0997">Cell inner membrane</keyword>
<keyword id="KW-1003">Cell membrane</keyword>
<keyword id="KW-0249">Electron transport</keyword>
<keyword id="KW-0285">Flavoprotein</keyword>
<keyword id="KW-0288">FMN</keyword>
<keyword id="KW-0472">Membrane</keyword>
<keyword id="KW-0597">Phosphoprotein</keyword>
<keyword id="KW-1278">Translocase</keyword>
<keyword id="KW-0812">Transmembrane</keyword>
<keyword id="KW-1133">Transmembrane helix</keyword>
<keyword id="KW-0813">Transport</keyword>
<feature type="chain" id="PRO_1000191678" description="Ion-translocating oxidoreductase complex subunit D">
    <location>
        <begin position="1"/>
        <end position="352"/>
    </location>
</feature>
<feature type="transmembrane region" description="Helical" evidence="1">
    <location>
        <begin position="20"/>
        <end position="40"/>
    </location>
</feature>
<feature type="transmembrane region" description="Helical" evidence="1">
    <location>
        <begin position="42"/>
        <end position="62"/>
    </location>
</feature>
<feature type="transmembrane region" description="Helical" evidence="1">
    <location>
        <begin position="78"/>
        <end position="109"/>
    </location>
</feature>
<feature type="transmembrane region" description="Helical" evidence="1">
    <location>
        <begin position="123"/>
        <end position="143"/>
    </location>
</feature>
<feature type="transmembrane region" description="Helical" evidence="1">
    <location>
        <begin position="148"/>
        <end position="168"/>
    </location>
</feature>
<feature type="transmembrane region" description="Helical" evidence="1">
    <location>
        <begin position="214"/>
        <end position="234"/>
    </location>
</feature>
<feature type="transmembrane region" description="Helical" evidence="1">
    <location>
        <begin position="242"/>
        <end position="262"/>
    </location>
</feature>
<feature type="transmembrane region" description="Helical" evidence="1">
    <location>
        <begin position="267"/>
        <end position="287"/>
    </location>
</feature>
<feature type="transmembrane region" description="Helical" evidence="1">
    <location>
        <begin position="301"/>
        <end position="321"/>
    </location>
</feature>
<feature type="transmembrane region" description="Helical" evidence="1">
    <location>
        <begin position="322"/>
        <end position="342"/>
    </location>
</feature>
<feature type="modified residue" description="FMN phosphoryl threonine" evidence="1">
    <location>
        <position position="187"/>
    </location>
</feature>
<sequence length="352" mass="38124">MVFRIASSPYTHNQRQTSRIMLLVLLAAVPGIAAQLWFFGWGTLVQILLASVSALLAEALVLKLRKQSVAATLKDNSALLTGLLLAVSIPPLAPWWMVVLGTVFAVIIAKQLYGGLGQNPFNPAMIGYVVLLISFPVQMTSWLPPHEIAVNIPGFIDAIQVIFSGHTASGGDMNTLRLGIDGISQATPLDTFKTSVRAGHSVEQIMQYPIYSGILAGAGWQWVNLAWLAGGLWLLWQKAIRWHIPLSFLVTLALCATLGWLFSPETLAAPQIHLLSGATMLGAFFILTDPVTASTTNRGRLIFGALAGLLVWLIRSFGGYPDGVAFAVLLANITVPLIDYYTRPRVYGHRKG</sequence>
<dbReference type="EC" id="7.-.-.-" evidence="1"/>
<dbReference type="EMBL" id="CU928160">
    <property type="protein sequence ID" value="CAQ98539.1"/>
    <property type="molecule type" value="Genomic_DNA"/>
</dbReference>
<dbReference type="RefSeq" id="WP_000231922.1">
    <property type="nucleotide sequence ID" value="NC_011741.1"/>
</dbReference>
<dbReference type="SMR" id="B7M0I7"/>
<dbReference type="KEGG" id="ecr:ECIAI1_1682"/>
<dbReference type="HOGENOM" id="CLU_042020_0_0_6"/>
<dbReference type="GO" id="GO:0005886">
    <property type="term" value="C:plasma membrane"/>
    <property type="evidence" value="ECO:0007669"/>
    <property type="project" value="UniProtKB-SubCell"/>
</dbReference>
<dbReference type="GO" id="GO:0022900">
    <property type="term" value="P:electron transport chain"/>
    <property type="evidence" value="ECO:0007669"/>
    <property type="project" value="UniProtKB-UniRule"/>
</dbReference>
<dbReference type="GO" id="GO:0055085">
    <property type="term" value="P:transmembrane transport"/>
    <property type="evidence" value="ECO:0007669"/>
    <property type="project" value="InterPro"/>
</dbReference>
<dbReference type="HAMAP" id="MF_00462">
    <property type="entry name" value="RsxD_RnfD"/>
    <property type="match status" value="1"/>
</dbReference>
<dbReference type="InterPro" id="IPR004338">
    <property type="entry name" value="NqrB/RnfD"/>
</dbReference>
<dbReference type="InterPro" id="IPR011303">
    <property type="entry name" value="RnfD_bac"/>
</dbReference>
<dbReference type="NCBIfam" id="NF002011">
    <property type="entry name" value="PRK00816.1"/>
    <property type="match status" value="1"/>
</dbReference>
<dbReference type="NCBIfam" id="TIGR01946">
    <property type="entry name" value="rnfD"/>
    <property type="match status" value="1"/>
</dbReference>
<dbReference type="PANTHER" id="PTHR30578">
    <property type="entry name" value="ELECTRON TRANSPORT COMPLEX PROTEIN RNFD"/>
    <property type="match status" value="1"/>
</dbReference>
<dbReference type="PANTHER" id="PTHR30578:SF0">
    <property type="entry name" value="ION-TRANSLOCATING OXIDOREDUCTASE COMPLEX SUBUNIT D"/>
    <property type="match status" value="1"/>
</dbReference>
<dbReference type="Pfam" id="PF03116">
    <property type="entry name" value="NQR2_RnfD_RnfE"/>
    <property type="match status" value="1"/>
</dbReference>
<proteinExistence type="inferred from homology"/>
<name>RSXD_ECO8A</name>
<organism>
    <name type="scientific">Escherichia coli O8 (strain IAI1)</name>
    <dbReference type="NCBI Taxonomy" id="585034"/>
    <lineage>
        <taxon>Bacteria</taxon>
        <taxon>Pseudomonadati</taxon>
        <taxon>Pseudomonadota</taxon>
        <taxon>Gammaproteobacteria</taxon>
        <taxon>Enterobacterales</taxon>
        <taxon>Enterobacteriaceae</taxon>
        <taxon>Escherichia</taxon>
    </lineage>
</organism>
<protein>
    <recommendedName>
        <fullName evidence="1">Ion-translocating oxidoreductase complex subunit D</fullName>
        <ecNumber evidence="1">7.-.-.-</ecNumber>
    </recommendedName>
    <alternativeName>
        <fullName evidence="1">Rsx electron transport complex subunit D</fullName>
    </alternativeName>
</protein>
<evidence type="ECO:0000255" key="1">
    <source>
        <dbReference type="HAMAP-Rule" id="MF_00462"/>
    </source>
</evidence>
<accession>B7M0I7</accession>
<comment type="function">
    <text evidence="1">Part of a membrane-bound complex that couples electron transfer with translocation of ions across the membrane. Required to maintain the reduced state of SoxR.</text>
</comment>
<comment type="cofactor">
    <cofactor evidence="1">
        <name>FMN</name>
        <dbReference type="ChEBI" id="CHEBI:58210"/>
    </cofactor>
</comment>
<comment type="subunit">
    <text evidence="1">The complex is composed of six subunits: RsxA, RsxB, RsxC, RsxD, RsxE and RsxG.</text>
</comment>
<comment type="subcellular location">
    <subcellularLocation>
        <location evidence="1">Cell inner membrane</location>
        <topology evidence="1">Multi-pass membrane protein</topology>
    </subcellularLocation>
</comment>
<comment type="similarity">
    <text evidence="1">Belongs to the NqrB/RnfD family.</text>
</comment>